<evidence type="ECO:0000255" key="1"/>
<evidence type="ECO:0000269" key="2">
    <source>
    </source>
</evidence>
<evidence type="ECO:0000269" key="3">
    <source>
    </source>
</evidence>
<evidence type="ECO:0000269" key="4">
    <source>
    </source>
</evidence>
<evidence type="ECO:0000303" key="5">
    <source>
    </source>
</evidence>
<evidence type="ECO:0000303" key="6">
    <source>
    </source>
</evidence>
<evidence type="ECO:0000305" key="7"/>
<evidence type="ECO:0000312" key="8">
    <source>
        <dbReference type="EMBL" id="BAD26198.1"/>
    </source>
</evidence>
<evidence type="ECO:0000312" key="9">
    <source>
        <dbReference type="EMBL" id="BAS77240.1"/>
    </source>
</evidence>
<keyword id="KW-0256">Endoplasmic reticulum</keyword>
<keyword id="KW-0333">Golgi apparatus</keyword>
<keyword id="KW-0406">Ion transport</keyword>
<keyword id="KW-0472">Membrane</keyword>
<keyword id="KW-1185">Reference proteome</keyword>
<keyword id="KW-0812">Transmembrane</keyword>
<keyword id="KW-1133">Transmembrane helix</keyword>
<keyword id="KW-0813">Transport</keyword>
<organism>
    <name type="scientific">Oryza sativa subsp. japonica</name>
    <name type="common">Rice</name>
    <dbReference type="NCBI Taxonomy" id="39947"/>
    <lineage>
        <taxon>Eukaryota</taxon>
        <taxon>Viridiplantae</taxon>
        <taxon>Streptophyta</taxon>
        <taxon>Embryophyta</taxon>
        <taxon>Tracheophyta</taxon>
        <taxon>Spermatophyta</taxon>
        <taxon>Magnoliopsida</taxon>
        <taxon>Liliopsida</taxon>
        <taxon>Poales</taxon>
        <taxon>Poaceae</taxon>
        <taxon>BOP clade</taxon>
        <taxon>Oryzoideae</taxon>
        <taxon>Oryzeae</taxon>
        <taxon>Oryzinae</taxon>
        <taxon>Oryza</taxon>
        <taxon>Oryza sativa</taxon>
    </lineage>
</organism>
<dbReference type="EMBL" id="AJ491817">
    <property type="protein sequence ID" value="CAD37184.1"/>
    <property type="molecule type" value="Genomic_DNA"/>
</dbReference>
<dbReference type="EMBL" id="AJ491818">
    <property type="protein sequence ID" value="CAD37185.1"/>
    <property type="molecule type" value="mRNA"/>
</dbReference>
<dbReference type="EMBL" id="AP003992">
    <property type="protein sequence ID" value="BAD27606.1"/>
    <property type="status" value="ALT_SEQ"/>
    <property type="molecule type" value="Genomic_DNA"/>
</dbReference>
<dbReference type="EMBL" id="AP005772">
    <property type="protein sequence ID" value="BAD26198.1"/>
    <property type="status" value="ALT_SEQ"/>
    <property type="molecule type" value="Genomic_DNA"/>
</dbReference>
<dbReference type="EMBL" id="AP008208">
    <property type="protein sequence ID" value="BAF07966.1"/>
    <property type="molecule type" value="Genomic_DNA"/>
</dbReference>
<dbReference type="EMBL" id="AP014958">
    <property type="protein sequence ID" value="BAS77240.1"/>
    <property type="molecule type" value="Genomic_DNA"/>
</dbReference>
<dbReference type="RefSeq" id="NP_001396274.1">
    <property type="nucleotide sequence ID" value="NM_001409345.1"/>
</dbReference>
<dbReference type="RefSeq" id="XP_015626193.1">
    <property type="nucleotide sequence ID" value="XM_015770707.1"/>
</dbReference>
<dbReference type="SMR" id="Q6H501"/>
<dbReference type="FunCoup" id="Q6H501">
    <property type="interactions" value="6"/>
</dbReference>
<dbReference type="STRING" id="39947.Q6H501"/>
<dbReference type="PaxDb" id="39947-Q6H501"/>
<dbReference type="EnsemblPlants" id="Os02t0175000-01">
    <property type="protein sequence ID" value="Os02t0175000-01"/>
    <property type="gene ID" value="Os02g0175000"/>
</dbReference>
<dbReference type="GeneID" id="4328468"/>
<dbReference type="Gramene" id="Os02t0175000-01">
    <property type="protein sequence ID" value="Os02t0175000-01"/>
    <property type="gene ID" value="Os02g0175000"/>
</dbReference>
<dbReference type="KEGG" id="dosa:Os02g0175000"/>
<dbReference type="eggNOG" id="KOG1341">
    <property type="taxonomic scope" value="Eukaryota"/>
</dbReference>
<dbReference type="InParanoid" id="Q6H501"/>
<dbReference type="OMA" id="LFALMMY"/>
<dbReference type="OrthoDB" id="9999863at2759"/>
<dbReference type="Proteomes" id="UP000000763">
    <property type="component" value="Chromosome 2"/>
</dbReference>
<dbReference type="Proteomes" id="UP000059680">
    <property type="component" value="Chromosome 2"/>
</dbReference>
<dbReference type="GO" id="GO:0005789">
    <property type="term" value="C:endoplasmic reticulum membrane"/>
    <property type="evidence" value="ECO:0000314"/>
    <property type="project" value="UniProtKB"/>
</dbReference>
<dbReference type="GO" id="GO:0000139">
    <property type="term" value="C:Golgi membrane"/>
    <property type="evidence" value="ECO:0000314"/>
    <property type="project" value="UniProtKB"/>
</dbReference>
<dbReference type="GO" id="GO:0005886">
    <property type="term" value="C:plasma membrane"/>
    <property type="evidence" value="ECO:0000318"/>
    <property type="project" value="GO_Central"/>
</dbReference>
<dbReference type="GO" id="GO:0008324">
    <property type="term" value="F:monoatomic cation transmembrane transporter activity"/>
    <property type="evidence" value="ECO:0000318"/>
    <property type="project" value="GO_Central"/>
</dbReference>
<dbReference type="GO" id="GO:0015081">
    <property type="term" value="F:sodium ion transmembrane transporter activity"/>
    <property type="evidence" value="ECO:0000314"/>
    <property type="project" value="UniProtKB"/>
</dbReference>
<dbReference type="GO" id="GO:0035725">
    <property type="term" value="P:sodium ion transmembrane transport"/>
    <property type="evidence" value="ECO:0000314"/>
    <property type="project" value="UniProtKB"/>
</dbReference>
<dbReference type="InterPro" id="IPR003445">
    <property type="entry name" value="Cat_transpt"/>
</dbReference>
<dbReference type="InterPro" id="IPR051143">
    <property type="entry name" value="TrkH_K-transport"/>
</dbReference>
<dbReference type="PANTHER" id="PTHR31064:SF31">
    <property type="entry name" value="CATION TRANSPORTER HKT1_3"/>
    <property type="match status" value="1"/>
</dbReference>
<dbReference type="PANTHER" id="PTHR31064">
    <property type="entry name" value="POTASSIUM TRANSPORT PROTEIN DDB_G0292412-RELATED"/>
    <property type="match status" value="1"/>
</dbReference>
<dbReference type="Pfam" id="PF02386">
    <property type="entry name" value="TrkH"/>
    <property type="match status" value="2"/>
</dbReference>
<name>HKT13_ORYSJ</name>
<accession>Q6H501</accession>
<accession>Q0E3H2</accession>
<accession>Q8L4V1</accession>
<reference key="1">
    <citation type="journal article" date="2003" name="Plant J.">
        <title>Sodium transport and HKT transporters: the rice model.</title>
        <authorList>
            <person name="Garciadeblas B."/>
            <person name="Senn M.E."/>
            <person name="Banuelos M.A."/>
            <person name="Rodriguez-Navarro A."/>
        </authorList>
    </citation>
    <scope>NUCLEOTIDE SEQUENCE [GENOMIC DNA / MRNA]</scope>
    <scope>TISSUE SPECIFICITY</scope>
    <scope>NOMENCLATURE</scope>
    <source>
        <strain>cv. Nipponbare</strain>
        <tissue>Root</tissue>
    </source>
</reference>
<reference key="2">
    <citation type="journal article" date="2005" name="Nature">
        <title>The map-based sequence of the rice genome.</title>
        <authorList>
            <consortium name="International rice genome sequencing project (IRGSP)"/>
        </authorList>
    </citation>
    <scope>NUCLEOTIDE SEQUENCE [LARGE SCALE GENOMIC DNA]</scope>
    <source>
        <strain>cv. Nipponbare</strain>
    </source>
</reference>
<reference key="3">
    <citation type="journal article" date="2008" name="Nucleic Acids Res.">
        <title>The rice annotation project database (RAP-DB): 2008 update.</title>
        <authorList>
            <consortium name="The rice annotation project (RAP)"/>
        </authorList>
    </citation>
    <scope>GENOME REANNOTATION</scope>
    <source>
        <strain>cv. Nipponbare</strain>
    </source>
</reference>
<reference key="4">
    <citation type="journal article" date="2013" name="Rice">
        <title>Improvement of the Oryza sativa Nipponbare reference genome using next generation sequence and optical map data.</title>
        <authorList>
            <person name="Kawahara Y."/>
            <person name="de la Bastide M."/>
            <person name="Hamilton J.P."/>
            <person name="Kanamori H."/>
            <person name="McCombie W.R."/>
            <person name="Ouyang S."/>
            <person name="Schwartz D.C."/>
            <person name="Tanaka T."/>
            <person name="Wu J."/>
            <person name="Zhou S."/>
            <person name="Childs K.L."/>
            <person name="Davidson R.M."/>
            <person name="Lin H."/>
            <person name="Quesada-Ocampo L."/>
            <person name="Vaillancourt B."/>
            <person name="Sakai H."/>
            <person name="Lee S.S."/>
            <person name="Kim J."/>
            <person name="Numa H."/>
            <person name="Itoh T."/>
            <person name="Buell C.R."/>
            <person name="Matsumoto T."/>
        </authorList>
    </citation>
    <scope>GENOME REANNOTATION</scope>
    <source>
        <strain>cv. Nipponbare</strain>
    </source>
</reference>
<reference key="5">
    <citation type="journal article" date="2006" name="Trends Plant Sci.">
        <title>Nomenclature for HKT transporters, key determinants of plant salinity tolerance.</title>
        <authorList>
            <person name="Platten J.D."/>
            <person name="Cotsaftis O."/>
            <person name="Berthomieu P."/>
            <person name="Bohnert H."/>
            <person name="Davenport R.J."/>
            <person name="Fairbairn D.J."/>
            <person name="Horie T."/>
            <person name="Leigh R.A."/>
            <person name="Lin H.X."/>
            <person name="Luan S."/>
            <person name="Maeser P."/>
            <person name="Pantoja O."/>
            <person name="Rodriguez-Navarro A."/>
            <person name="Schachtman D.P."/>
            <person name="Schroeder J.I."/>
            <person name="Sentenac H."/>
            <person name="Uozumi N."/>
            <person name="Very A.A."/>
            <person name="Zhu J.K."/>
            <person name="Dennis E.S."/>
            <person name="Tester M."/>
        </authorList>
    </citation>
    <scope>GENE FAMILY</scope>
    <scope>NOMENCLATURE</scope>
</reference>
<reference key="6">
    <citation type="journal article" date="2009" name="Plant Physiol.">
        <title>Diversity in expression patterns and functional properties in the rice HKT transporter family.</title>
        <authorList>
            <person name="Jabnoune M."/>
            <person name="Espeout S."/>
            <person name="Mieulet D."/>
            <person name="Fizames C."/>
            <person name="Verdeil J.L."/>
            <person name="Conejero G."/>
            <person name="Rodriguez-Navarro A."/>
            <person name="Sentenac H."/>
            <person name="Guiderdoni E."/>
            <person name="Abdelly C."/>
            <person name="Very A.A."/>
        </authorList>
    </citation>
    <scope>FUNCTION</scope>
    <scope>TISSUE SPECIFICITY</scope>
</reference>
<reference key="7">
    <citation type="journal article" date="2015" name="J. Exp. Bot.">
        <title>Identification of rice cornichon as a possible cargo receptor for the Golgi-localized sodium transporter OsHKT1;3.</title>
        <authorList>
            <person name="Rosas-Santiago P."/>
            <person name="Lagunas-Gomez D."/>
            <person name="Barkla B.J."/>
            <person name="Vera-Estrella R."/>
            <person name="Lalonde S."/>
            <person name="Jones A."/>
            <person name="Frommer W.B."/>
            <person name="Zimmermannova O."/>
            <person name="Sychrova H."/>
            <person name="Pantoja O."/>
        </authorList>
    </citation>
    <scope>FUNCTION</scope>
    <scope>INTERACTION WITH CNIH1</scope>
    <scope>SUBCELLULAR LOCATION</scope>
</reference>
<comment type="function">
    <text evidence="3 4">Functions as a highly-selective sodium transporter (PubMed:19482918, PubMed:25750424). Does not seem to function as sodium-potassium cotransporter (PubMed:19482918, PubMed:25750424). May be involved in turgor changes for rolling and unrolling of leaves in response to environmental variations (PubMed:19482918).</text>
</comment>
<comment type="catalytic activity">
    <reaction evidence="3 4">
        <text>Na(+)(in) = Na(+)(out)</text>
        <dbReference type="Rhea" id="RHEA:34963"/>
        <dbReference type="ChEBI" id="CHEBI:29101"/>
    </reaction>
</comment>
<comment type="subunit">
    <text evidence="4">Interacts with CNIH1.</text>
</comment>
<comment type="subcellular location">
    <subcellularLocation>
        <location evidence="4">Endoplasmic reticulum membrane</location>
        <topology evidence="1">Multi-pass membrane protein</topology>
    </subcellularLocation>
    <subcellularLocation>
        <location evidence="4">Golgi apparatus membrane</location>
        <topology evidence="1">Multi-pass membrane protein</topology>
    </subcellularLocation>
</comment>
<comment type="tissue specificity">
    <text evidence="2 3">Weakly expressed (PubMed:12795699). In roots, expressed in epidermis, exodermis, cortex, and sieve elements and companion cells of phloem (PubMed:19482918). In mature leaves, expressed in large highly vacuolated cells of the adaxial epidermis, phloem and xylem (PubMed:19482918).</text>
</comment>
<comment type="domain">
    <text evidence="7">HKT transporters are proposed to contain 4 pore-forming regions enclosed by transmembrane segments with each containing a potassium channel-like selectivity filter motif.</text>
</comment>
<comment type="similarity">
    <text evidence="7">Belongs to the TrkH potassium transport family. HKT (TC 2.A.38.3) subfamily.</text>
</comment>
<comment type="sequence caution" evidence="7">
    <conflict type="erroneous gene model prediction">
        <sequence resource="EMBL-CDS" id="BAD26198"/>
    </conflict>
</comment>
<comment type="sequence caution" evidence="7">
    <conflict type="erroneous gene model prediction">
        <sequence resource="EMBL-CDS" id="BAD27606"/>
    </conflict>
</comment>
<protein>
    <recommendedName>
        <fullName evidence="6">Cation transporter HKT1;3</fullName>
        <shortName evidence="6">OsHKT1;3</shortName>
    </recommendedName>
    <alternativeName>
        <fullName evidence="5">Cation transporter HKT6</fullName>
        <shortName evidence="5">OsHKT6</shortName>
    </alternativeName>
</protein>
<gene>
    <name evidence="6" type="primary">HKT1;3</name>
    <name evidence="5" type="synonym">HKT6</name>
    <name evidence="9" type="ordered locus">Os02g0175000</name>
    <name evidence="7" type="ordered locus">LOC_Os02g07830</name>
    <name evidence="8" type="ORF">OSJNBa0073A21.31</name>
</gene>
<proteinExistence type="evidence at protein level"/>
<feature type="chain" id="PRO_0000070470" description="Cation transporter HKT1;3">
    <location>
        <begin position="1"/>
        <end position="530"/>
    </location>
</feature>
<feature type="topological domain" description="Cytoplasmic" evidence="1">
    <location>
        <begin position="1"/>
        <end position="46"/>
    </location>
</feature>
<feature type="transmembrane region" description="Helical; Name=1" evidence="1">
    <location>
        <begin position="47"/>
        <end position="67"/>
    </location>
</feature>
<feature type="transmembrane region" description="Helical; Name=2" evidence="1">
    <location>
        <begin position="108"/>
        <end position="128"/>
    </location>
</feature>
<feature type="topological domain" description="Cytoplasmic" evidence="1">
    <location>
        <begin position="129"/>
        <end position="190"/>
    </location>
</feature>
<feature type="transmembrane region" description="Helical; Name=3" evidence="1">
    <location>
        <begin position="191"/>
        <end position="211"/>
    </location>
</feature>
<feature type="transmembrane region" description="Helical; Name=4" evidence="1">
    <location>
        <begin position="264"/>
        <end position="284"/>
    </location>
</feature>
<feature type="topological domain" description="Cytoplasmic" evidence="1">
    <location>
        <begin position="285"/>
        <end position="321"/>
    </location>
</feature>
<feature type="transmembrane region" description="Helical; Name=5" evidence="1">
    <location>
        <begin position="322"/>
        <end position="342"/>
    </location>
</feature>
<feature type="transmembrane region" description="Helical; Name=6" evidence="1">
    <location>
        <begin position="383"/>
        <end position="403"/>
    </location>
</feature>
<feature type="topological domain" description="Cytoplasmic" evidence="1">
    <location>
        <begin position="404"/>
        <end position="421"/>
    </location>
</feature>
<feature type="transmembrane region" description="Helical; Name=7" evidence="1">
    <location>
        <begin position="422"/>
        <end position="442"/>
    </location>
</feature>
<feature type="transmembrane region" description="Helical; Name=8" evidence="1">
    <location>
        <begin position="494"/>
        <end position="514"/>
    </location>
</feature>
<feature type="topological domain" description="Cytoplasmic" evidence="1">
    <location>
        <begin position="515"/>
        <end position="530"/>
    </location>
</feature>
<sequence>MNHCLVVSHKKLQTFRTFAASKFSSFTKSAQKSIKYSFQFIYQNNPLFVHVAYFALISFAGYGSLKVLKPRDKSNTLKDLDVLFTSVSASTVSSMATVEMEDFSSAQLWVLTILMLIGGEVFTSMLGIHFMRAEFGTKESVSTRDHSPCIDIESITSTKFGPSTQGTKVTVSFSELRMENGGHVEPKTIKFLGFVVMGYLLITNLGGSLLIYLYLNLVPSAHKILKRKGIGIIVFSVFTAISSVGNCGFTPVNENMIIFQKNSILLLLILPQILAGNTLFAPCLRLMVWSLEKITGKKDCRYILEYPKAIGYKHLMSTRESVYLTLTVVSLIILQTVLFLSLEWSSVALDGMSNYQKIVSALFQSVNARHAGESVTDLSNLSSAILVLYTIMMYLPGYTSFLPRHDGEDSKTEKINKRKGLLENWIFSHMSYLAIFVMLICITERDSMATDPLNFNVFSILFEVVSAYGNVGFSVGYSCKRLLNHDARCKDASYGFAGKWSDNGKAILIIVMLFGRLKTFNMKGGRAWKLR</sequence>